<protein>
    <recommendedName>
        <fullName evidence="1">SsrA-binding protein</fullName>
    </recommendedName>
    <alternativeName>
        <fullName evidence="1">Small protein B</fullName>
    </alternativeName>
</protein>
<keyword id="KW-0963">Cytoplasm</keyword>
<keyword id="KW-1185">Reference proteome</keyword>
<keyword id="KW-0694">RNA-binding</keyword>
<proteinExistence type="inferred from homology"/>
<evidence type="ECO:0000255" key="1">
    <source>
        <dbReference type="HAMAP-Rule" id="MF_00023"/>
    </source>
</evidence>
<evidence type="ECO:0000256" key="2">
    <source>
        <dbReference type="SAM" id="MobiDB-lite"/>
    </source>
</evidence>
<comment type="function">
    <text evidence="1">Required for rescue of stalled ribosomes mediated by trans-translation. Binds to transfer-messenger RNA (tmRNA), required for stable association of tmRNA with ribosomes. tmRNA and SmpB together mimic tRNA shape, replacing the anticodon stem-loop with SmpB. tmRNA is encoded by the ssrA gene; the 2 termini fold to resemble tRNA(Ala) and it encodes a 'tag peptide', a short internal open reading frame. During trans-translation Ala-aminoacylated tmRNA acts like a tRNA, entering the A-site of stalled ribosomes, displacing the stalled mRNA. The ribosome then switches to translate the ORF on the tmRNA; the nascent peptide is terminated with the 'tag peptide' encoded by the tmRNA and targeted for degradation. The ribosome is freed to recommence translation, which seems to be the essential function of trans-translation.</text>
</comment>
<comment type="subcellular location">
    <subcellularLocation>
        <location evidence="1">Cytoplasm</location>
    </subcellularLocation>
    <text evidence="1">The tmRNA-SmpB complex associates with stalled 70S ribosomes.</text>
</comment>
<comment type="similarity">
    <text evidence="1">Belongs to the SmpB family.</text>
</comment>
<dbReference type="EMBL" id="BA000028">
    <property type="protein sequence ID" value="BAC14382.1"/>
    <property type="molecule type" value="Genomic_DNA"/>
</dbReference>
<dbReference type="RefSeq" id="WP_011066817.1">
    <property type="nucleotide sequence ID" value="NC_004193.1"/>
</dbReference>
<dbReference type="SMR" id="Q8ENQ2"/>
<dbReference type="STRING" id="221109.gene:10734677"/>
<dbReference type="KEGG" id="oih:OB2426"/>
<dbReference type="eggNOG" id="COG0691">
    <property type="taxonomic scope" value="Bacteria"/>
</dbReference>
<dbReference type="HOGENOM" id="CLU_108953_0_1_9"/>
<dbReference type="OrthoDB" id="9805462at2"/>
<dbReference type="PhylomeDB" id="Q8ENQ2"/>
<dbReference type="Proteomes" id="UP000000822">
    <property type="component" value="Chromosome"/>
</dbReference>
<dbReference type="GO" id="GO:0005829">
    <property type="term" value="C:cytosol"/>
    <property type="evidence" value="ECO:0007669"/>
    <property type="project" value="TreeGrafter"/>
</dbReference>
<dbReference type="GO" id="GO:0003723">
    <property type="term" value="F:RNA binding"/>
    <property type="evidence" value="ECO:0007669"/>
    <property type="project" value="UniProtKB-UniRule"/>
</dbReference>
<dbReference type="GO" id="GO:0070929">
    <property type="term" value="P:trans-translation"/>
    <property type="evidence" value="ECO:0007669"/>
    <property type="project" value="UniProtKB-UniRule"/>
</dbReference>
<dbReference type="CDD" id="cd09294">
    <property type="entry name" value="SmpB"/>
    <property type="match status" value="1"/>
</dbReference>
<dbReference type="Gene3D" id="2.40.280.10">
    <property type="match status" value="1"/>
</dbReference>
<dbReference type="HAMAP" id="MF_00023">
    <property type="entry name" value="SmpB"/>
    <property type="match status" value="1"/>
</dbReference>
<dbReference type="InterPro" id="IPR023620">
    <property type="entry name" value="SmpB"/>
</dbReference>
<dbReference type="InterPro" id="IPR000037">
    <property type="entry name" value="SsrA-bd_prot"/>
</dbReference>
<dbReference type="InterPro" id="IPR020081">
    <property type="entry name" value="SsrA-bd_prot_CS"/>
</dbReference>
<dbReference type="NCBIfam" id="NF003843">
    <property type="entry name" value="PRK05422.1"/>
    <property type="match status" value="1"/>
</dbReference>
<dbReference type="NCBIfam" id="TIGR00086">
    <property type="entry name" value="smpB"/>
    <property type="match status" value="1"/>
</dbReference>
<dbReference type="PANTHER" id="PTHR30308:SF2">
    <property type="entry name" value="SSRA-BINDING PROTEIN"/>
    <property type="match status" value="1"/>
</dbReference>
<dbReference type="PANTHER" id="PTHR30308">
    <property type="entry name" value="TMRNA-BINDING COMPONENT OF TRANS-TRANSLATION TAGGING COMPLEX"/>
    <property type="match status" value="1"/>
</dbReference>
<dbReference type="Pfam" id="PF01668">
    <property type="entry name" value="SmpB"/>
    <property type="match status" value="1"/>
</dbReference>
<dbReference type="SUPFAM" id="SSF74982">
    <property type="entry name" value="Small protein B (SmpB)"/>
    <property type="match status" value="1"/>
</dbReference>
<dbReference type="PROSITE" id="PS01317">
    <property type="entry name" value="SSRP"/>
    <property type="match status" value="1"/>
</dbReference>
<sequence length="155" mass="17956">MPKGNGKVIAQNKKASHDYFIEDTYEAGIVLHGTEIKSIRNGRVNIKDSHARIDRKGEVQLINLHIAEYEQGNRYNHDPTRSRKLLLHRKEIDKLIGLTQQQGYALVPLKIYLKNGFAKVLIGLGKGKKKYDKREDLKQKQMKRDVDRAIKDHMR</sequence>
<reference key="1">
    <citation type="journal article" date="2002" name="Nucleic Acids Res.">
        <title>Genome sequence of Oceanobacillus iheyensis isolated from the Iheya Ridge and its unexpected adaptive capabilities to extreme environments.</title>
        <authorList>
            <person name="Takami H."/>
            <person name="Takaki Y."/>
            <person name="Uchiyama I."/>
        </authorList>
    </citation>
    <scope>NUCLEOTIDE SEQUENCE [LARGE SCALE GENOMIC DNA]</scope>
    <source>
        <strain>DSM 14371 / CIP 107618 / JCM 11309 / KCTC 3954 / HTE831</strain>
    </source>
</reference>
<gene>
    <name evidence="1" type="primary">smpB</name>
    <name type="ordered locus">OB2426</name>
</gene>
<name>SSRP_OCEIH</name>
<feature type="chain" id="PRO_0000102997" description="SsrA-binding protein">
    <location>
        <begin position="1"/>
        <end position="155"/>
    </location>
</feature>
<feature type="region of interest" description="Disordered" evidence="2">
    <location>
        <begin position="132"/>
        <end position="155"/>
    </location>
</feature>
<organism>
    <name type="scientific">Oceanobacillus iheyensis (strain DSM 14371 / CIP 107618 / JCM 11309 / KCTC 3954 / HTE831)</name>
    <dbReference type="NCBI Taxonomy" id="221109"/>
    <lineage>
        <taxon>Bacteria</taxon>
        <taxon>Bacillati</taxon>
        <taxon>Bacillota</taxon>
        <taxon>Bacilli</taxon>
        <taxon>Bacillales</taxon>
        <taxon>Bacillaceae</taxon>
        <taxon>Oceanobacillus</taxon>
    </lineage>
</organism>
<accession>Q8ENQ2</accession>